<reference key="1">
    <citation type="journal article" date="2015" name="Science">
        <title>Six enzymes from mayapple that complete the biosynthetic pathway to the etoposide aglycone.</title>
        <authorList>
            <person name="Lau W."/>
            <person name="Sattely E.S."/>
        </authorList>
    </citation>
    <scope>NUCLEOTIDE SEQUENCE [MRNA]</scope>
    <scope>FUNCTION</scope>
    <scope>CATALYTIC ACTIVITY</scope>
    <scope>BIOTECHNOLOGY</scope>
    <scope>TISSUE SPECIFICITY</scope>
    <scope>INDUCTION BY WOUNDING</scope>
    <scope>PATHWAY</scope>
</reference>
<evidence type="ECO:0000250" key="1">
    <source>
        <dbReference type="UniProtKB" id="F1DBB3"/>
    </source>
</evidence>
<evidence type="ECO:0000250" key="2">
    <source>
        <dbReference type="UniProtKB" id="P28002"/>
    </source>
</evidence>
<evidence type="ECO:0000255" key="3">
    <source>
        <dbReference type="PROSITE-ProRule" id="PRU01020"/>
    </source>
</evidence>
<evidence type="ECO:0000269" key="4">
    <source>
    </source>
</evidence>
<evidence type="ECO:0000303" key="5">
    <source>
    </source>
</evidence>
<evidence type="ECO:0000305" key="6">
    <source>
    </source>
</evidence>
<organism>
    <name type="scientific">Sinopodophyllum hexandrum</name>
    <name type="common">Himalayan may apple</name>
    <name type="synonym">Podophyllum hexandrum</name>
    <dbReference type="NCBI Taxonomy" id="93608"/>
    <lineage>
        <taxon>Eukaryota</taxon>
        <taxon>Viridiplantae</taxon>
        <taxon>Streptophyta</taxon>
        <taxon>Embryophyta</taxon>
        <taxon>Tracheophyta</taxon>
        <taxon>Spermatophyta</taxon>
        <taxon>Magnoliopsida</taxon>
        <taxon>Ranunculales</taxon>
        <taxon>Berberidaceae</taxon>
        <taxon>Podophylloideae</taxon>
        <taxon>Podophylleae</taxon>
        <taxon>Sinopodophyllum</taxon>
    </lineage>
</organism>
<proteinExistence type="evidence at protein level"/>
<name>DOMT1_SINHE</name>
<dbReference type="EC" id="2.1.1.330" evidence="3 4"/>
<dbReference type="EMBL" id="KT390155">
    <property type="protein sequence ID" value="ALG05117.1"/>
    <property type="molecule type" value="mRNA"/>
</dbReference>
<dbReference type="SMR" id="A0A0N9HTA1"/>
<dbReference type="KEGG" id="ag:ALG05117"/>
<dbReference type="UniPathway" id="UPA00711"/>
<dbReference type="GO" id="GO:0008171">
    <property type="term" value="F:O-methyltransferase activity"/>
    <property type="evidence" value="ECO:0000314"/>
    <property type="project" value="UniProtKB"/>
</dbReference>
<dbReference type="GO" id="GO:0046983">
    <property type="term" value="F:protein dimerization activity"/>
    <property type="evidence" value="ECO:0007669"/>
    <property type="project" value="InterPro"/>
</dbReference>
<dbReference type="GO" id="GO:0008757">
    <property type="term" value="F:S-adenosylmethionine-dependent methyltransferase activity"/>
    <property type="evidence" value="ECO:0000314"/>
    <property type="project" value="UniProtKB"/>
</dbReference>
<dbReference type="GO" id="GO:0032259">
    <property type="term" value="P:methylation"/>
    <property type="evidence" value="ECO:0007669"/>
    <property type="project" value="UniProtKB-KW"/>
</dbReference>
<dbReference type="GO" id="GO:0009699">
    <property type="term" value="P:phenylpropanoid biosynthetic process"/>
    <property type="evidence" value="ECO:0000314"/>
    <property type="project" value="UniProtKB"/>
</dbReference>
<dbReference type="GO" id="GO:0009611">
    <property type="term" value="P:response to wounding"/>
    <property type="evidence" value="ECO:0000270"/>
    <property type="project" value="UniProtKB"/>
</dbReference>
<dbReference type="FunFam" id="1.10.10.10:FF:000357">
    <property type="entry name" value="Caffeic acid 3-O-methyltransferase"/>
    <property type="match status" value="1"/>
</dbReference>
<dbReference type="FunFam" id="3.40.50.150:FF:000061">
    <property type="entry name" value="Caffeic acid O-methyltransferase"/>
    <property type="match status" value="1"/>
</dbReference>
<dbReference type="Gene3D" id="3.40.50.150">
    <property type="entry name" value="Vaccinia Virus protein VP39"/>
    <property type="match status" value="1"/>
</dbReference>
<dbReference type="Gene3D" id="1.10.10.10">
    <property type="entry name" value="Winged helix-like DNA-binding domain superfamily/Winged helix DNA-binding domain"/>
    <property type="match status" value="1"/>
</dbReference>
<dbReference type="InterPro" id="IPR016461">
    <property type="entry name" value="COMT-like"/>
</dbReference>
<dbReference type="InterPro" id="IPR001077">
    <property type="entry name" value="O_MeTrfase_dom"/>
</dbReference>
<dbReference type="InterPro" id="IPR012967">
    <property type="entry name" value="Plant_O-MeTrfase_dimerisation"/>
</dbReference>
<dbReference type="InterPro" id="IPR029063">
    <property type="entry name" value="SAM-dependent_MTases_sf"/>
</dbReference>
<dbReference type="InterPro" id="IPR036388">
    <property type="entry name" value="WH-like_DNA-bd_sf"/>
</dbReference>
<dbReference type="InterPro" id="IPR036390">
    <property type="entry name" value="WH_DNA-bd_sf"/>
</dbReference>
<dbReference type="PANTHER" id="PTHR11746">
    <property type="entry name" value="O-METHYLTRANSFERASE"/>
    <property type="match status" value="1"/>
</dbReference>
<dbReference type="Pfam" id="PF08100">
    <property type="entry name" value="Dimerisation"/>
    <property type="match status" value="1"/>
</dbReference>
<dbReference type="Pfam" id="PF00891">
    <property type="entry name" value="Methyltransf_2"/>
    <property type="match status" value="1"/>
</dbReference>
<dbReference type="PIRSF" id="PIRSF005739">
    <property type="entry name" value="O-mtase"/>
    <property type="match status" value="1"/>
</dbReference>
<dbReference type="SUPFAM" id="SSF53335">
    <property type="entry name" value="S-adenosyl-L-methionine-dependent methyltransferases"/>
    <property type="match status" value="1"/>
</dbReference>
<dbReference type="SUPFAM" id="SSF46785">
    <property type="entry name" value="Winged helix' DNA-binding domain"/>
    <property type="match status" value="1"/>
</dbReference>
<dbReference type="PROSITE" id="PS51683">
    <property type="entry name" value="SAM_OMT_II"/>
    <property type="match status" value="1"/>
</dbReference>
<keyword id="KW-0489">Methyltransferase</keyword>
<keyword id="KW-0949">S-adenosyl-L-methionine</keyword>
<keyword id="KW-0808">Transferase</keyword>
<sequence>MDTRADAEIKAMELIGIGVLPLAMKAIIELNVLEILSKAGPDTQLTAAQIVTDIPTTNPNAGFQLDRILRLLASHSVLSSSITKSGERVYGLTPMCKYFLPDQDGVSLAPMVVTIHDKVLLQSWHYLKDSVLKQGSLPFTEAFGMSPFEYSVSDTRFNKVFNAGMFDHSTLCMRDVLQRYKGFQGLGELVDVGGGTGGSLKMILSQYPNLKGINFDLPHVVADAPSFPGVKHIGGDMFESVPSGDAIFMKWILHDWDDGRCLTLLKNCWNALPEHGKVIIVEWILPSDAATDPTSRRVFTADLMMLAFSEGGKERTLGDYGALAKEAGFTTVKDFPCANGISVIEFHKK</sequence>
<gene>
    <name evidence="5" type="primary">OMT1</name>
    <name evidence="5" type="synonym">Phex13114</name>
</gene>
<accession>A0A0N9HTA1</accession>
<feature type="chain" id="PRO_0000451905" description="Desmethyl-yatein O-methyltransferase">
    <location>
        <begin position="1"/>
        <end position="349"/>
    </location>
</feature>
<feature type="active site" description="Proton acceptor" evidence="3">
    <location>
        <position position="254"/>
    </location>
</feature>
<feature type="active site" evidence="1">
    <location>
        <position position="282"/>
    </location>
</feature>
<feature type="active site" evidence="1">
    <location>
        <position position="314"/>
    </location>
</feature>
<feature type="binding site" evidence="2">
    <location>
        <position position="193"/>
    </location>
    <ligand>
        <name>S-adenosyl-L-homocysteine</name>
        <dbReference type="ChEBI" id="CHEBI:57856"/>
    </ligand>
</feature>
<feature type="binding site" evidence="2">
    <location>
        <position position="216"/>
    </location>
    <ligand>
        <name>S-adenosyl-L-homocysteine</name>
        <dbReference type="ChEBI" id="CHEBI:57856"/>
    </ligand>
</feature>
<feature type="binding site" evidence="2">
    <location>
        <position position="236"/>
    </location>
    <ligand>
        <name>S-adenosyl-L-homocysteine</name>
        <dbReference type="ChEBI" id="CHEBI:57856"/>
    </ligand>
</feature>
<feature type="binding site" evidence="2">
    <location>
        <position position="237"/>
    </location>
    <ligand>
        <name>S-adenosyl-L-homocysteine</name>
        <dbReference type="ChEBI" id="CHEBI:57856"/>
    </ligand>
</feature>
<feature type="binding site" evidence="2">
    <location>
        <position position="249"/>
    </location>
    <ligand>
        <name>S-adenosyl-L-homocysteine</name>
        <dbReference type="ChEBI" id="CHEBI:57856"/>
    </ligand>
</feature>
<feature type="binding site" evidence="2">
    <location>
        <position position="250"/>
    </location>
    <ligand>
        <name>S-adenosyl-L-homocysteine</name>
        <dbReference type="ChEBI" id="CHEBI:57856"/>
    </ligand>
</feature>
<comment type="function">
    <text evidence="4">O-methyltransferase involved in the biosynthesis of etoposide, a chemotherapeutic compound of the topoisomerase inhibitor family (PubMed:26359402). Catalyzes the methylation of (-)-5'-demethylyatein to produce (-)-yatein (PubMed:26359402).</text>
</comment>
<comment type="catalytic activity">
    <reaction evidence="4">
        <text>(-)-5'-demethylyatein + S-adenosyl-L-methionine = (-)-yatein + S-adenosyl-L-homocysteine + H(+)</text>
        <dbReference type="Rhea" id="RHEA:49040"/>
        <dbReference type="ChEBI" id="CHEBI:4553"/>
        <dbReference type="ChEBI" id="CHEBI:15378"/>
        <dbReference type="ChEBI" id="CHEBI:57856"/>
        <dbReference type="ChEBI" id="CHEBI:59789"/>
        <dbReference type="ChEBI" id="CHEBI:90894"/>
        <dbReference type="EC" id="2.1.1.330"/>
    </reaction>
    <physiologicalReaction direction="left-to-right" evidence="4">
        <dbReference type="Rhea" id="RHEA:49041"/>
    </physiologicalReaction>
</comment>
<comment type="pathway">
    <text evidence="4">Aromatic compound metabolism; phenylpropanoid biosynthesis.</text>
</comment>
<comment type="subunit">
    <text evidence="2">Homodimer.</text>
</comment>
<comment type="tissue specificity">
    <text evidence="4">Mostly expressed in stems, and, to a lower extent, in leaves.</text>
</comment>
<comment type="induction">
    <text evidence="4">Transiently induced after wounding.</text>
</comment>
<comment type="biotechnology">
    <text evidence="6">Combinatorially expression of Sinopodophyllum hexandrum (mayapple) genes of the podophyllotoxin pathway (e.g. DIR, PLR, SDH, CYP719A23, OMT3, CYP71CU1, OMT1, 2-ODD, CYP71BE54 and CYP82D61) in Nicotiana benthamiana (tobacco) results in the production of the chemotherapeutic compound etoposide.</text>
</comment>
<comment type="similarity">
    <text evidence="3">Belongs to the class I-like SAM-binding methyltransferase superfamily. Cation-independent O-methyltransferase family. COMT subfamily.</text>
</comment>
<protein>
    <recommendedName>
        <fullName evidence="5">Desmethyl-yatein O-methyltransferase</fullName>
        <ecNumber evidence="3 4">2.1.1.330</ecNumber>
    </recommendedName>
</protein>